<keyword id="KW-0325">Glycoprotein</keyword>
<keyword id="KW-0479">Metal-binding</keyword>
<keyword id="KW-0597">Phosphoprotein</keyword>
<keyword id="KW-1185">Reference proteome</keyword>
<keyword id="KW-0964">Secreted</keyword>
<keyword id="KW-0732">Signal</keyword>
<keyword id="KW-0862">Zinc</keyword>
<keyword id="KW-0863">Zinc-finger</keyword>
<protein>
    <recommendedName>
        <fullName>RING finger and SPRY domain-containing protein 1</fullName>
    </recommendedName>
</protein>
<accession>Q5R881</accession>
<proteinExistence type="evidence at transcript level"/>
<feature type="signal peptide" evidence="2">
    <location>
        <begin position="1"/>
        <end position="16"/>
    </location>
</feature>
<feature type="chain" id="PRO_0000278789" description="RING finger and SPRY domain-containing protein 1">
    <location>
        <begin position="17"/>
        <end position="576"/>
    </location>
</feature>
<feature type="domain" description="B30.2/SPRY" evidence="4">
    <location>
        <begin position="300"/>
        <end position="483"/>
    </location>
</feature>
<feature type="zinc finger region" description="RING-type" evidence="3">
    <location>
        <begin position="527"/>
        <end position="562"/>
    </location>
</feature>
<feature type="region of interest" description="Disordered" evidence="5">
    <location>
        <begin position="50"/>
        <end position="99"/>
    </location>
</feature>
<feature type="compositionally biased region" description="Polar residues" evidence="5">
    <location>
        <begin position="57"/>
        <end position="68"/>
    </location>
</feature>
<feature type="compositionally biased region" description="Basic residues" evidence="5">
    <location>
        <begin position="83"/>
        <end position="97"/>
    </location>
</feature>
<feature type="modified residue" description="Phosphoserine" evidence="1">
    <location>
        <position position="50"/>
    </location>
</feature>
<feature type="glycosylation site" description="N-linked (GlcNAc...) asparagine" evidence="2">
    <location>
        <position position="314"/>
    </location>
</feature>
<dbReference type="EMBL" id="CR859873">
    <property type="protein sequence ID" value="CAH92029.1"/>
    <property type="molecule type" value="mRNA"/>
</dbReference>
<dbReference type="RefSeq" id="NP_001126179.1">
    <property type="nucleotide sequence ID" value="NM_001132707.1"/>
</dbReference>
<dbReference type="RefSeq" id="XP_009249028.1">
    <property type="nucleotide sequence ID" value="XM_009250753.3"/>
</dbReference>
<dbReference type="RefSeq" id="XP_009249029.1">
    <property type="nucleotide sequence ID" value="XM_009250754.4"/>
</dbReference>
<dbReference type="RefSeq" id="XP_063573155.1">
    <property type="nucleotide sequence ID" value="XM_063717085.1"/>
</dbReference>
<dbReference type="SMR" id="Q5R881"/>
<dbReference type="FunCoup" id="Q5R881">
    <property type="interactions" value="1552"/>
</dbReference>
<dbReference type="STRING" id="9601.ENSPPYP00000008340"/>
<dbReference type="GlyCosmos" id="Q5R881">
    <property type="glycosylation" value="1 site, No reported glycans"/>
</dbReference>
<dbReference type="Ensembl" id="ENSPPYT00000008681.2">
    <property type="protein sequence ID" value="ENSPPYP00000008340.1"/>
    <property type="gene ID" value="ENSPPYG00000007383.2"/>
</dbReference>
<dbReference type="GeneID" id="100173142"/>
<dbReference type="KEGG" id="pon:100173142"/>
<dbReference type="CTD" id="89970"/>
<dbReference type="eggNOG" id="KOG2242">
    <property type="taxonomic scope" value="Eukaryota"/>
</dbReference>
<dbReference type="GeneTree" id="ENSGT00940000157894"/>
<dbReference type="HOGENOM" id="CLU_026400_0_0_1"/>
<dbReference type="InParanoid" id="Q5R881"/>
<dbReference type="OMA" id="IAFDGCR"/>
<dbReference type="OrthoDB" id="10017393at2759"/>
<dbReference type="TreeFam" id="TF313546"/>
<dbReference type="Proteomes" id="UP000001595">
    <property type="component" value="Chromosome 16"/>
</dbReference>
<dbReference type="GO" id="GO:0005737">
    <property type="term" value="C:cytoplasm"/>
    <property type="evidence" value="ECO:0007669"/>
    <property type="project" value="TreeGrafter"/>
</dbReference>
<dbReference type="GO" id="GO:0005576">
    <property type="term" value="C:extracellular region"/>
    <property type="evidence" value="ECO:0007669"/>
    <property type="project" value="UniProtKB-SubCell"/>
</dbReference>
<dbReference type="GO" id="GO:0004842">
    <property type="term" value="F:ubiquitin-protein transferase activity"/>
    <property type="evidence" value="ECO:0007669"/>
    <property type="project" value="InterPro"/>
</dbReference>
<dbReference type="GO" id="GO:0008270">
    <property type="term" value="F:zinc ion binding"/>
    <property type="evidence" value="ECO:0007669"/>
    <property type="project" value="UniProtKB-KW"/>
</dbReference>
<dbReference type="GO" id="GO:0051603">
    <property type="term" value="P:proteolysis involved in protein catabolic process"/>
    <property type="evidence" value="ECO:0007669"/>
    <property type="project" value="TreeGrafter"/>
</dbReference>
<dbReference type="CDD" id="cd16566">
    <property type="entry name" value="RING-HC_RSPRY1"/>
    <property type="match status" value="1"/>
</dbReference>
<dbReference type="CDD" id="cd12883">
    <property type="entry name" value="SPRY_RING"/>
    <property type="match status" value="1"/>
</dbReference>
<dbReference type="Gene3D" id="2.60.120.920">
    <property type="match status" value="1"/>
</dbReference>
<dbReference type="Gene3D" id="3.30.40.10">
    <property type="entry name" value="Zinc/RING finger domain, C3HC4 (zinc finger)"/>
    <property type="match status" value="1"/>
</dbReference>
<dbReference type="InterPro" id="IPR016024">
    <property type="entry name" value="ARM-type_fold"/>
</dbReference>
<dbReference type="InterPro" id="IPR001870">
    <property type="entry name" value="B30.2/SPRY"/>
</dbReference>
<dbReference type="InterPro" id="IPR043136">
    <property type="entry name" value="B30.2/SPRY_sf"/>
</dbReference>
<dbReference type="InterPro" id="IPR013320">
    <property type="entry name" value="ConA-like_dom_sf"/>
</dbReference>
<dbReference type="InterPro" id="IPR045129">
    <property type="entry name" value="RNF123/RSPRY1-like"/>
</dbReference>
<dbReference type="InterPro" id="IPR003877">
    <property type="entry name" value="SPRY_dom"/>
</dbReference>
<dbReference type="InterPro" id="IPR035774">
    <property type="entry name" value="SPRY_RSPRY1"/>
</dbReference>
<dbReference type="InterPro" id="IPR001841">
    <property type="entry name" value="Znf_RING"/>
</dbReference>
<dbReference type="InterPro" id="IPR013083">
    <property type="entry name" value="Znf_RING/FYVE/PHD"/>
</dbReference>
<dbReference type="PANTHER" id="PTHR13363:SF6">
    <property type="entry name" value="RING FINGER AND SPRY DOMAIN-CONTAINING PROTEIN 1"/>
    <property type="match status" value="1"/>
</dbReference>
<dbReference type="PANTHER" id="PTHR13363">
    <property type="entry name" value="RING FINGER AND SRY DOMAIN-CONTAINING"/>
    <property type="match status" value="1"/>
</dbReference>
<dbReference type="Pfam" id="PF00622">
    <property type="entry name" value="SPRY"/>
    <property type="match status" value="1"/>
</dbReference>
<dbReference type="Pfam" id="PF13920">
    <property type="entry name" value="zf-C3HC4_3"/>
    <property type="match status" value="1"/>
</dbReference>
<dbReference type="SMART" id="SM00184">
    <property type="entry name" value="RING"/>
    <property type="match status" value="1"/>
</dbReference>
<dbReference type="SMART" id="SM00449">
    <property type="entry name" value="SPRY"/>
    <property type="match status" value="1"/>
</dbReference>
<dbReference type="SUPFAM" id="SSF48371">
    <property type="entry name" value="ARM repeat"/>
    <property type="match status" value="1"/>
</dbReference>
<dbReference type="SUPFAM" id="SSF49899">
    <property type="entry name" value="Concanavalin A-like lectins/glucanases"/>
    <property type="match status" value="1"/>
</dbReference>
<dbReference type="SUPFAM" id="SSF57850">
    <property type="entry name" value="RING/U-box"/>
    <property type="match status" value="1"/>
</dbReference>
<dbReference type="PROSITE" id="PS50188">
    <property type="entry name" value="B302_SPRY"/>
    <property type="match status" value="1"/>
</dbReference>
<dbReference type="PROSITE" id="PS50089">
    <property type="entry name" value="ZF_RING_2"/>
    <property type="match status" value="1"/>
</dbReference>
<reference key="1">
    <citation type="submission" date="2004-11" db="EMBL/GenBank/DDBJ databases">
        <authorList>
            <consortium name="The German cDNA consortium"/>
        </authorList>
    </citation>
    <scope>NUCLEOTIDE SEQUENCE [LARGE SCALE MRNA]</scope>
    <source>
        <tissue>Kidney</tissue>
    </source>
</reference>
<organism>
    <name type="scientific">Pongo abelii</name>
    <name type="common">Sumatran orangutan</name>
    <name type="synonym">Pongo pygmaeus abelii</name>
    <dbReference type="NCBI Taxonomy" id="9601"/>
    <lineage>
        <taxon>Eukaryota</taxon>
        <taxon>Metazoa</taxon>
        <taxon>Chordata</taxon>
        <taxon>Craniata</taxon>
        <taxon>Vertebrata</taxon>
        <taxon>Euteleostomi</taxon>
        <taxon>Mammalia</taxon>
        <taxon>Eutheria</taxon>
        <taxon>Euarchontoglires</taxon>
        <taxon>Primates</taxon>
        <taxon>Haplorrhini</taxon>
        <taxon>Catarrhini</taxon>
        <taxon>Hominidae</taxon>
        <taxon>Pongo</taxon>
    </lineage>
</organism>
<evidence type="ECO:0000250" key="1">
    <source>
        <dbReference type="UniProtKB" id="Q8BVR6"/>
    </source>
</evidence>
<evidence type="ECO:0000255" key="2"/>
<evidence type="ECO:0000255" key="3">
    <source>
        <dbReference type="PROSITE-ProRule" id="PRU00175"/>
    </source>
</evidence>
<evidence type="ECO:0000255" key="4">
    <source>
        <dbReference type="PROSITE-ProRule" id="PRU00548"/>
    </source>
</evidence>
<evidence type="ECO:0000256" key="5">
    <source>
        <dbReference type="SAM" id="MobiDB-lite"/>
    </source>
</evidence>
<evidence type="ECO:0000305" key="6"/>
<name>RSPRY_PONAB</name>
<sequence length="576" mass="64210">MIVFGWAVFLASRSLGQGLLLTLEEHIAHFLGTGGATTTMGNSCICRDDSGTDDSVDTQQQQAENSAVPTADTRSQPRDPVRPPRRGRGPHEPRRKKQNVDGLVLDTLAVIRTLVDNDQEPPYSMITLHEMAETDEGWLDVVQSLIRVIPLEDPLGPAVITLLLDECPLPTKDALQKLTEILNLNGEVACQDSSHPAKHRNTSAVLGCLAEKLAGPASIGLLSPGILEYLLQCLKLQSHPTVMLFALIALEKFAQTSENKLTISESSISDRLVTLESWANDPDYLKRQVGFCAQWSLDNLFLKEGRQLTYEKVNLSSIRAMLNSNDVSEYLKISPHGLEARCDASSFESVRCTFCVDAGVWYYEVTVVTSGVMQIGWATRDSKFLNHEGYGIGDDEYSCAYDGCRQLIWYNARSKPHIHPCWKEGDTVGFLLDLNEKQMIFFLNGNQLPPEKQVFSSTVSGFFAAASFMSYQQCEFNFGAKPFKYPPSMKFSTFNDYAFLTAEEKIILPRHRRLALLKQVSIRENCCSLCCDEVADTQLKPCGHSDLCMDCALQLETCPLCRKEIVSRIRQISHIS</sequence>
<gene>
    <name type="primary">RSPRY1</name>
</gene>
<comment type="subcellular location">
    <subcellularLocation>
        <location evidence="6">Secreted</location>
    </subcellularLocation>
</comment>